<proteinExistence type="inferred from homology"/>
<organism>
    <name type="scientific">Chelativorans sp. (strain BNC1)</name>
    <dbReference type="NCBI Taxonomy" id="266779"/>
    <lineage>
        <taxon>Bacteria</taxon>
        <taxon>Pseudomonadati</taxon>
        <taxon>Pseudomonadota</taxon>
        <taxon>Alphaproteobacteria</taxon>
        <taxon>Hyphomicrobiales</taxon>
        <taxon>Phyllobacteriaceae</taxon>
        <taxon>Chelativorans</taxon>
    </lineage>
</organism>
<keyword id="KW-0687">Ribonucleoprotein</keyword>
<keyword id="KW-0689">Ribosomal protein</keyword>
<keyword id="KW-0694">RNA-binding</keyword>
<keyword id="KW-0699">rRNA-binding</keyword>
<comment type="function">
    <text evidence="1">One of the primary rRNA binding proteins, it binds directly to 16S rRNA where it helps nucleate assembly of the platform of the 30S subunit by binding and bridging several RNA helices of the 16S rRNA.</text>
</comment>
<comment type="function">
    <text evidence="1">Forms an intersubunit bridge (bridge B4) with the 23S rRNA of the 50S subunit in the ribosome.</text>
</comment>
<comment type="subunit">
    <text evidence="1">Part of the 30S ribosomal subunit. Forms a bridge to the 50S subunit in the 70S ribosome, contacting the 23S rRNA.</text>
</comment>
<comment type="similarity">
    <text evidence="1">Belongs to the universal ribosomal protein uS15 family.</text>
</comment>
<dbReference type="EMBL" id="CP000390">
    <property type="protein sequence ID" value="ABG65301.1"/>
    <property type="molecule type" value="Genomic_DNA"/>
</dbReference>
<dbReference type="SMR" id="Q11BC4"/>
<dbReference type="STRING" id="266779.Meso_3934"/>
<dbReference type="KEGG" id="mes:Meso_3934"/>
<dbReference type="eggNOG" id="COG0184">
    <property type="taxonomic scope" value="Bacteria"/>
</dbReference>
<dbReference type="HOGENOM" id="CLU_148518_0_0_5"/>
<dbReference type="OrthoDB" id="9799262at2"/>
<dbReference type="GO" id="GO:0022627">
    <property type="term" value="C:cytosolic small ribosomal subunit"/>
    <property type="evidence" value="ECO:0007669"/>
    <property type="project" value="TreeGrafter"/>
</dbReference>
<dbReference type="GO" id="GO:0019843">
    <property type="term" value="F:rRNA binding"/>
    <property type="evidence" value="ECO:0007669"/>
    <property type="project" value="UniProtKB-UniRule"/>
</dbReference>
<dbReference type="GO" id="GO:0003735">
    <property type="term" value="F:structural constituent of ribosome"/>
    <property type="evidence" value="ECO:0007669"/>
    <property type="project" value="InterPro"/>
</dbReference>
<dbReference type="GO" id="GO:0006412">
    <property type="term" value="P:translation"/>
    <property type="evidence" value="ECO:0007669"/>
    <property type="project" value="UniProtKB-UniRule"/>
</dbReference>
<dbReference type="CDD" id="cd00353">
    <property type="entry name" value="Ribosomal_S15p_S13e"/>
    <property type="match status" value="1"/>
</dbReference>
<dbReference type="FunFam" id="1.10.287.10:FF:000002">
    <property type="entry name" value="30S ribosomal protein S15"/>
    <property type="match status" value="1"/>
</dbReference>
<dbReference type="Gene3D" id="6.10.250.3130">
    <property type="match status" value="1"/>
</dbReference>
<dbReference type="Gene3D" id="1.10.287.10">
    <property type="entry name" value="S15/NS1, RNA-binding"/>
    <property type="match status" value="1"/>
</dbReference>
<dbReference type="HAMAP" id="MF_01343_B">
    <property type="entry name" value="Ribosomal_uS15_B"/>
    <property type="match status" value="1"/>
</dbReference>
<dbReference type="InterPro" id="IPR000589">
    <property type="entry name" value="Ribosomal_uS15"/>
</dbReference>
<dbReference type="InterPro" id="IPR005290">
    <property type="entry name" value="Ribosomal_uS15_bac-type"/>
</dbReference>
<dbReference type="InterPro" id="IPR009068">
    <property type="entry name" value="uS15_NS1_RNA-bd_sf"/>
</dbReference>
<dbReference type="NCBIfam" id="TIGR00952">
    <property type="entry name" value="S15_bact"/>
    <property type="match status" value="1"/>
</dbReference>
<dbReference type="PANTHER" id="PTHR23321">
    <property type="entry name" value="RIBOSOMAL PROTEIN S15, BACTERIAL AND ORGANELLAR"/>
    <property type="match status" value="1"/>
</dbReference>
<dbReference type="PANTHER" id="PTHR23321:SF26">
    <property type="entry name" value="SMALL RIBOSOMAL SUBUNIT PROTEIN US15M"/>
    <property type="match status" value="1"/>
</dbReference>
<dbReference type="Pfam" id="PF00312">
    <property type="entry name" value="Ribosomal_S15"/>
    <property type="match status" value="1"/>
</dbReference>
<dbReference type="SMART" id="SM01387">
    <property type="entry name" value="Ribosomal_S15"/>
    <property type="match status" value="1"/>
</dbReference>
<dbReference type="SUPFAM" id="SSF47060">
    <property type="entry name" value="S15/NS1 RNA-binding domain"/>
    <property type="match status" value="1"/>
</dbReference>
<dbReference type="PROSITE" id="PS00362">
    <property type="entry name" value="RIBOSOMAL_S15"/>
    <property type="match status" value="1"/>
</dbReference>
<protein>
    <recommendedName>
        <fullName evidence="1">Small ribosomal subunit protein uS15</fullName>
    </recommendedName>
    <alternativeName>
        <fullName evidence="2">30S ribosomal protein S15</fullName>
    </alternativeName>
</protein>
<reference key="1">
    <citation type="submission" date="2006-06" db="EMBL/GenBank/DDBJ databases">
        <title>Complete sequence of chromosome of Mesorhizobium sp. BNC1.</title>
        <authorList>
            <consortium name="US DOE Joint Genome Institute"/>
            <person name="Copeland A."/>
            <person name="Lucas S."/>
            <person name="Lapidus A."/>
            <person name="Barry K."/>
            <person name="Detter J.C."/>
            <person name="Glavina del Rio T."/>
            <person name="Hammon N."/>
            <person name="Israni S."/>
            <person name="Dalin E."/>
            <person name="Tice H."/>
            <person name="Pitluck S."/>
            <person name="Chertkov O."/>
            <person name="Brettin T."/>
            <person name="Bruce D."/>
            <person name="Han C."/>
            <person name="Tapia R."/>
            <person name="Gilna P."/>
            <person name="Schmutz J."/>
            <person name="Larimer F."/>
            <person name="Land M."/>
            <person name="Hauser L."/>
            <person name="Kyrpides N."/>
            <person name="Mikhailova N."/>
            <person name="Richardson P."/>
        </authorList>
    </citation>
    <scope>NUCLEOTIDE SEQUENCE [LARGE SCALE GENOMIC DNA]</scope>
    <source>
        <strain>BNC1</strain>
    </source>
</reference>
<sequence>MSITAERKQELLKEFATANADTGSPEVQVALLTERIKNLTEHFKEHQKDNHSRRGLLKLVSQRRRLLDYVKRKDEARYQALIEKLGLRR</sequence>
<gene>
    <name evidence="1" type="primary">rpsO</name>
    <name type="ordered locus">Meso_3934</name>
</gene>
<name>RS15_CHESB</name>
<feature type="chain" id="PRO_0000255504" description="Small ribosomal subunit protein uS15">
    <location>
        <begin position="1"/>
        <end position="89"/>
    </location>
</feature>
<evidence type="ECO:0000255" key="1">
    <source>
        <dbReference type="HAMAP-Rule" id="MF_01343"/>
    </source>
</evidence>
<evidence type="ECO:0000305" key="2"/>
<accession>Q11BC4</accession>